<organism>
    <name type="scientific">Arabidopsis thaliana</name>
    <name type="common">Mouse-ear cress</name>
    <dbReference type="NCBI Taxonomy" id="3702"/>
    <lineage>
        <taxon>Eukaryota</taxon>
        <taxon>Viridiplantae</taxon>
        <taxon>Streptophyta</taxon>
        <taxon>Embryophyta</taxon>
        <taxon>Tracheophyta</taxon>
        <taxon>Spermatophyta</taxon>
        <taxon>Magnoliopsida</taxon>
        <taxon>eudicotyledons</taxon>
        <taxon>Gunneridae</taxon>
        <taxon>Pentapetalae</taxon>
        <taxon>rosids</taxon>
        <taxon>malvids</taxon>
        <taxon>Brassicales</taxon>
        <taxon>Brassicaceae</taxon>
        <taxon>Camelineae</taxon>
        <taxon>Arabidopsis</taxon>
    </lineage>
</organism>
<comment type="function">
    <text>H(+)/sulfate cotransporter that may play a role in the regulation of sulfate assimilation.</text>
</comment>
<comment type="subcellular location">
    <subcellularLocation>
        <location evidence="3">Membrane</location>
        <topology evidence="3">Multi-pass membrane protein</topology>
    </subcellularLocation>
</comment>
<comment type="tissue specificity">
    <text>Expressed only in leaves.</text>
</comment>
<comment type="similarity">
    <text evidence="3">Belongs to the SLC26A/SulP transporter (TC 2.A.53) family.</text>
</comment>
<dbReference type="EMBL" id="AB004060">
    <property type="protein sequence ID" value="BAA20282.1"/>
    <property type="molecule type" value="mRNA"/>
</dbReference>
<dbReference type="EMBL" id="AC002330">
    <property type="protein sequence ID" value="AAC78252.1"/>
    <property type="molecule type" value="Genomic_DNA"/>
</dbReference>
<dbReference type="EMBL" id="AL161495">
    <property type="protein sequence ID" value="CAB77755.1"/>
    <property type="molecule type" value="Genomic_DNA"/>
</dbReference>
<dbReference type="EMBL" id="CP002687">
    <property type="protein sequence ID" value="AEE82215.1"/>
    <property type="molecule type" value="Genomic_DNA"/>
</dbReference>
<dbReference type="PIR" id="T01079">
    <property type="entry name" value="T01079"/>
</dbReference>
<dbReference type="RefSeq" id="NP_192179.1">
    <property type="nucleotide sequence ID" value="NM_116504.3"/>
</dbReference>
<dbReference type="SMR" id="O04289"/>
<dbReference type="FunCoup" id="O04289">
    <property type="interactions" value="317"/>
</dbReference>
<dbReference type="STRING" id="3702.O04289"/>
<dbReference type="PaxDb" id="3702-AT4G02700.1"/>
<dbReference type="ProteomicsDB" id="226830"/>
<dbReference type="EnsemblPlants" id="AT4G02700.1">
    <property type="protein sequence ID" value="AT4G02700.1"/>
    <property type="gene ID" value="AT4G02700"/>
</dbReference>
<dbReference type="GeneID" id="828201"/>
<dbReference type="Gramene" id="AT4G02700.1">
    <property type="protein sequence ID" value="AT4G02700.1"/>
    <property type="gene ID" value="AT4G02700"/>
</dbReference>
<dbReference type="KEGG" id="ath:AT4G02700"/>
<dbReference type="Araport" id="AT4G02700"/>
<dbReference type="TAIR" id="AT4G02700">
    <property type="gene designation" value="SULTR3"/>
</dbReference>
<dbReference type="eggNOG" id="KOG0236">
    <property type="taxonomic scope" value="Eukaryota"/>
</dbReference>
<dbReference type="HOGENOM" id="CLU_003182_13_2_1"/>
<dbReference type="InParanoid" id="O04289"/>
<dbReference type="OMA" id="DFMLHTA"/>
<dbReference type="PhylomeDB" id="O04289"/>
<dbReference type="PRO" id="PR:O04289"/>
<dbReference type="Proteomes" id="UP000006548">
    <property type="component" value="Chromosome 4"/>
</dbReference>
<dbReference type="ExpressionAtlas" id="O04289">
    <property type="expression patterns" value="baseline and differential"/>
</dbReference>
<dbReference type="GO" id="GO:0016020">
    <property type="term" value="C:membrane"/>
    <property type="evidence" value="ECO:0007669"/>
    <property type="project" value="UniProtKB-SubCell"/>
</dbReference>
<dbReference type="GO" id="GO:0008271">
    <property type="term" value="F:secondary active sulfate transmembrane transporter activity"/>
    <property type="evidence" value="ECO:0007669"/>
    <property type="project" value="InterPro"/>
</dbReference>
<dbReference type="GO" id="GO:0015293">
    <property type="term" value="F:symporter activity"/>
    <property type="evidence" value="ECO:0007669"/>
    <property type="project" value="UniProtKB-KW"/>
</dbReference>
<dbReference type="CDD" id="cd07042">
    <property type="entry name" value="STAS_SulP_like_sulfate_transporter"/>
    <property type="match status" value="1"/>
</dbReference>
<dbReference type="FunFam" id="3.30.750.24:FF:000002">
    <property type="entry name" value="Sulfate transporter 31"/>
    <property type="match status" value="1"/>
</dbReference>
<dbReference type="Gene3D" id="3.30.750.24">
    <property type="entry name" value="STAS domain"/>
    <property type="match status" value="1"/>
</dbReference>
<dbReference type="InterPro" id="IPR018045">
    <property type="entry name" value="S04_transporter_CS"/>
</dbReference>
<dbReference type="InterPro" id="IPR011547">
    <property type="entry name" value="SLC26A/SulP_dom"/>
</dbReference>
<dbReference type="InterPro" id="IPR001902">
    <property type="entry name" value="SLC26A/SulP_fam"/>
</dbReference>
<dbReference type="InterPro" id="IPR002645">
    <property type="entry name" value="STAS_dom"/>
</dbReference>
<dbReference type="InterPro" id="IPR036513">
    <property type="entry name" value="STAS_dom_sf"/>
</dbReference>
<dbReference type="NCBIfam" id="TIGR00815">
    <property type="entry name" value="sulP"/>
    <property type="match status" value="1"/>
</dbReference>
<dbReference type="PANTHER" id="PTHR11814">
    <property type="entry name" value="SULFATE TRANSPORTER"/>
    <property type="match status" value="1"/>
</dbReference>
<dbReference type="Pfam" id="PF01740">
    <property type="entry name" value="STAS"/>
    <property type="match status" value="1"/>
</dbReference>
<dbReference type="Pfam" id="PF00916">
    <property type="entry name" value="Sulfate_transp"/>
    <property type="match status" value="1"/>
</dbReference>
<dbReference type="SUPFAM" id="SSF52091">
    <property type="entry name" value="SpoIIaa-like"/>
    <property type="match status" value="1"/>
</dbReference>
<dbReference type="PROSITE" id="PS01130">
    <property type="entry name" value="SLC26A"/>
    <property type="match status" value="1"/>
</dbReference>
<dbReference type="PROSITE" id="PS50801">
    <property type="entry name" value="STAS"/>
    <property type="match status" value="1"/>
</dbReference>
<protein>
    <recommendedName>
        <fullName>Sulfate transporter 3.2</fullName>
    </recommendedName>
    <alternativeName>
        <fullName>AST77</fullName>
    </alternativeName>
</protein>
<gene>
    <name type="primary">SULTR3;2</name>
    <name type="ordered locus">At4g02700</name>
    <name type="ORF">T10P11.3</name>
</gene>
<proteinExistence type="evidence at transcript level"/>
<reference key="1">
    <citation type="online journal article" date="1999" name="Plant Gene Register">
        <title>Identification of two leaf-specific sulfate transporters in Arabidopsis thaliana.</title>
        <authorList>
            <person name="Takahashi H."/>
            <person name="Sasakura N."/>
            <person name="Kimura A."/>
            <person name="Watanabe A."/>
            <person name="Saito K."/>
        </authorList>
        <locator>PGR99-154</locator>
    </citation>
    <scope>NUCLEOTIDE SEQUENCE [MRNA]</scope>
    <source>
        <strain>cv. Columbia</strain>
    </source>
</reference>
<reference key="2">
    <citation type="journal article" date="1999" name="Nature">
        <title>Sequence and analysis of chromosome 4 of the plant Arabidopsis thaliana.</title>
        <authorList>
            <person name="Mayer K.F.X."/>
            <person name="Schueller C."/>
            <person name="Wambutt R."/>
            <person name="Murphy G."/>
            <person name="Volckaert G."/>
            <person name="Pohl T."/>
            <person name="Duesterhoeft A."/>
            <person name="Stiekema W."/>
            <person name="Entian K.-D."/>
            <person name="Terryn N."/>
            <person name="Harris B."/>
            <person name="Ansorge W."/>
            <person name="Brandt P."/>
            <person name="Grivell L.A."/>
            <person name="Rieger M."/>
            <person name="Weichselgartner M."/>
            <person name="de Simone V."/>
            <person name="Obermaier B."/>
            <person name="Mache R."/>
            <person name="Mueller M."/>
            <person name="Kreis M."/>
            <person name="Delseny M."/>
            <person name="Puigdomenech P."/>
            <person name="Watson M."/>
            <person name="Schmidtheini T."/>
            <person name="Reichert B."/>
            <person name="Portetelle D."/>
            <person name="Perez-Alonso M."/>
            <person name="Boutry M."/>
            <person name="Bancroft I."/>
            <person name="Vos P."/>
            <person name="Hoheisel J."/>
            <person name="Zimmermann W."/>
            <person name="Wedler H."/>
            <person name="Ridley P."/>
            <person name="Langham S.-A."/>
            <person name="McCullagh B."/>
            <person name="Bilham L."/>
            <person name="Robben J."/>
            <person name="van der Schueren J."/>
            <person name="Grymonprez B."/>
            <person name="Chuang Y.-J."/>
            <person name="Vandenbussche F."/>
            <person name="Braeken M."/>
            <person name="Weltjens I."/>
            <person name="Voet M."/>
            <person name="Bastiaens I."/>
            <person name="Aert R."/>
            <person name="Defoor E."/>
            <person name="Weitzenegger T."/>
            <person name="Bothe G."/>
            <person name="Ramsperger U."/>
            <person name="Hilbert H."/>
            <person name="Braun M."/>
            <person name="Holzer E."/>
            <person name="Brandt A."/>
            <person name="Peters S."/>
            <person name="van Staveren M."/>
            <person name="Dirkse W."/>
            <person name="Mooijman P."/>
            <person name="Klein Lankhorst R."/>
            <person name="Rose M."/>
            <person name="Hauf J."/>
            <person name="Koetter P."/>
            <person name="Berneiser S."/>
            <person name="Hempel S."/>
            <person name="Feldpausch M."/>
            <person name="Lamberth S."/>
            <person name="Van den Daele H."/>
            <person name="De Keyser A."/>
            <person name="Buysshaert C."/>
            <person name="Gielen J."/>
            <person name="Villarroel R."/>
            <person name="De Clercq R."/>
            <person name="van Montagu M."/>
            <person name="Rogers J."/>
            <person name="Cronin A."/>
            <person name="Quail M.A."/>
            <person name="Bray-Allen S."/>
            <person name="Clark L."/>
            <person name="Doggett J."/>
            <person name="Hall S."/>
            <person name="Kay M."/>
            <person name="Lennard N."/>
            <person name="McLay K."/>
            <person name="Mayes R."/>
            <person name="Pettett A."/>
            <person name="Rajandream M.A."/>
            <person name="Lyne M."/>
            <person name="Benes V."/>
            <person name="Rechmann S."/>
            <person name="Borkova D."/>
            <person name="Bloecker H."/>
            <person name="Scharfe M."/>
            <person name="Grimm M."/>
            <person name="Loehnert T.-H."/>
            <person name="Dose S."/>
            <person name="de Haan M."/>
            <person name="Maarse A.C."/>
            <person name="Schaefer M."/>
            <person name="Mueller-Auer S."/>
            <person name="Gabel C."/>
            <person name="Fuchs M."/>
            <person name="Fartmann B."/>
            <person name="Granderath K."/>
            <person name="Dauner D."/>
            <person name="Herzl A."/>
            <person name="Neumann S."/>
            <person name="Argiriou A."/>
            <person name="Vitale D."/>
            <person name="Liguori R."/>
            <person name="Piravandi E."/>
            <person name="Massenet O."/>
            <person name="Quigley F."/>
            <person name="Clabauld G."/>
            <person name="Muendlein A."/>
            <person name="Felber R."/>
            <person name="Schnabl S."/>
            <person name="Hiller R."/>
            <person name="Schmidt W."/>
            <person name="Lecharny A."/>
            <person name="Aubourg S."/>
            <person name="Chefdor F."/>
            <person name="Cooke R."/>
            <person name="Berger C."/>
            <person name="Monfort A."/>
            <person name="Casacuberta E."/>
            <person name="Gibbons T."/>
            <person name="Weber N."/>
            <person name="Vandenbol M."/>
            <person name="Bargues M."/>
            <person name="Terol J."/>
            <person name="Torres A."/>
            <person name="Perez-Perez A."/>
            <person name="Purnelle B."/>
            <person name="Bent E."/>
            <person name="Johnson S."/>
            <person name="Tacon D."/>
            <person name="Jesse T."/>
            <person name="Heijnen L."/>
            <person name="Schwarz S."/>
            <person name="Scholler P."/>
            <person name="Heber S."/>
            <person name="Francs P."/>
            <person name="Bielke C."/>
            <person name="Frishman D."/>
            <person name="Haase D."/>
            <person name="Lemcke K."/>
            <person name="Mewes H.-W."/>
            <person name="Stocker S."/>
            <person name="Zaccaria P."/>
            <person name="Bevan M."/>
            <person name="Wilson R.K."/>
            <person name="de la Bastide M."/>
            <person name="Habermann K."/>
            <person name="Parnell L."/>
            <person name="Dedhia N."/>
            <person name="Gnoj L."/>
            <person name="Schutz K."/>
            <person name="Huang E."/>
            <person name="Spiegel L."/>
            <person name="Sekhon M."/>
            <person name="Murray J."/>
            <person name="Sheet P."/>
            <person name="Cordes M."/>
            <person name="Abu-Threideh J."/>
            <person name="Stoneking T."/>
            <person name="Kalicki J."/>
            <person name="Graves T."/>
            <person name="Harmon G."/>
            <person name="Edwards J."/>
            <person name="Latreille P."/>
            <person name="Courtney L."/>
            <person name="Cloud J."/>
            <person name="Abbott A."/>
            <person name="Scott K."/>
            <person name="Johnson D."/>
            <person name="Minx P."/>
            <person name="Bentley D."/>
            <person name="Fulton B."/>
            <person name="Miller N."/>
            <person name="Greco T."/>
            <person name="Kemp K."/>
            <person name="Kramer J."/>
            <person name="Fulton L."/>
            <person name="Mardis E."/>
            <person name="Dante M."/>
            <person name="Pepin K."/>
            <person name="Hillier L.W."/>
            <person name="Nelson J."/>
            <person name="Spieth J."/>
            <person name="Ryan E."/>
            <person name="Andrews S."/>
            <person name="Geisel C."/>
            <person name="Layman D."/>
            <person name="Du H."/>
            <person name="Ali J."/>
            <person name="Berghoff A."/>
            <person name="Jones K."/>
            <person name="Drone K."/>
            <person name="Cotton M."/>
            <person name="Joshu C."/>
            <person name="Antonoiu B."/>
            <person name="Zidanic M."/>
            <person name="Strong C."/>
            <person name="Sun H."/>
            <person name="Lamar B."/>
            <person name="Yordan C."/>
            <person name="Ma P."/>
            <person name="Zhong J."/>
            <person name="Preston R."/>
            <person name="Vil D."/>
            <person name="Shekher M."/>
            <person name="Matero A."/>
            <person name="Shah R."/>
            <person name="Swaby I.K."/>
            <person name="O'Shaughnessy A."/>
            <person name="Rodriguez M."/>
            <person name="Hoffman J."/>
            <person name="Till S."/>
            <person name="Granat S."/>
            <person name="Shohdy N."/>
            <person name="Hasegawa A."/>
            <person name="Hameed A."/>
            <person name="Lodhi M."/>
            <person name="Johnson A."/>
            <person name="Chen E."/>
            <person name="Marra M.A."/>
            <person name="Martienssen R."/>
            <person name="McCombie W.R."/>
        </authorList>
    </citation>
    <scope>NUCLEOTIDE SEQUENCE [LARGE SCALE GENOMIC DNA]</scope>
    <source>
        <strain>cv. Columbia</strain>
    </source>
</reference>
<reference key="3">
    <citation type="journal article" date="2017" name="Plant J.">
        <title>Araport11: a complete reannotation of the Arabidopsis thaliana reference genome.</title>
        <authorList>
            <person name="Cheng C.Y."/>
            <person name="Krishnakumar V."/>
            <person name="Chan A.P."/>
            <person name="Thibaud-Nissen F."/>
            <person name="Schobel S."/>
            <person name="Town C.D."/>
        </authorList>
    </citation>
    <scope>GENOME REANNOTATION</scope>
    <source>
        <strain>cv. Columbia</strain>
    </source>
</reference>
<accession>O04289</accession>
<feature type="chain" id="PRO_0000080178" description="Sulfate transporter 3.2">
    <location>
        <begin position="1"/>
        <end position="646"/>
    </location>
</feature>
<feature type="topological domain" description="Cytoplasmic" evidence="1">
    <location>
        <begin position="1"/>
        <end position="76"/>
    </location>
</feature>
<feature type="transmembrane region" description="Helical" evidence="1">
    <location>
        <begin position="77"/>
        <end position="97"/>
    </location>
</feature>
<feature type="topological domain" description="Extracellular" evidence="1">
    <location>
        <begin position="98"/>
        <end position="99"/>
    </location>
</feature>
<feature type="transmembrane region" description="Helical" evidence="1">
    <location>
        <begin position="100"/>
        <end position="120"/>
    </location>
</feature>
<feature type="topological domain" description="Cytoplasmic" evidence="1">
    <location>
        <begin position="121"/>
        <end position="124"/>
    </location>
</feature>
<feature type="transmembrane region" description="Helical" evidence="1">
    <location>
        <begin position="125"/>
        <end position="145"/>
    </location>
</feature>
<feature type="topological domain" description="Extracellular" evidence="1">
    <location>
        <begin position="146"/>
        <end position="154"/>
    </location>
</feature>
<feature type="transmembrane region" description="Helical" evidence="1">
    <location>
        <begin position="155"/>
        <end position="175"/>
    </location>
</feature>
<feature type="topological domain" description="Cytoplasmic" evidence="1">
    <location>
        <position position="176"/>
    </location>
</feature>
<feature type="transmembrane region" description="Helical" evidence="1">
    <location>
        <begin position="177"/>
        <end position="197"/>
    </location>
</feature>
<feature type="topological domain" description="Extracellular" evidence="1">
    <location>
        <begin position="198"/>
        <end position="235"/>
    </location>
</feature>
<feature type="transmembrane region" description="Helical" evidence="1">
    <location>
        <begin position="236"/>
        <end position="256"/>
    </location>
</feature>
<feature type="topological domain" description="Cytoplasmic" evidence="1">
    <location>
        <begin position="257"/>
        <end position="262"/>
    </location>
</feature>
<feature type="transmembrane region" description="Helical" evidence="1">
    <location>
        <begin position="263"/>
        <end position="283"/>
    </location>
</feature>
<feature type="topological domain" description="Extracellular" evidence="1">
    <location>
        <begin position="284"/>
        <end position="315"/>
    </location>
</feature>
<feature type="transmembrane region" description="Helical" evidence="1">
    <location>
        <begin position="316"/>
        <end position="336"/>
    </location>
</feature>
<feature type="topological domain" description="Cytoplasmic" evidence="1">
    <location>
        <begin position="337"/>
        <end position="354"/>
    </location>
</feature>
<feature type="transmembrane region" description="Helical" evidence="1">
    <location>
        <begin position="355"/>
        <end position="375"/>
    </location>
</feature>
<feature type="topological domain" description="Extracellular" evidence="1">
    <location>
        <begin position="376"/>
        <end position="390"/>
    </location>
</feature>
<feature type="transmembrane region" description="Helical" evidence="1">
    <location>
        <begin position="391"/>
        <end position="411"/>
    </location>
</feature>
<feature type="transmembrane region" description="Helical" evidence="1">
    <location>
        <begin position="412"/>
        <end position="432"/>
    </location>
</feature>
<feature type="topological domain" description="Extracellular" evidence="1">
    <location>
        <begin position="433"/>
        <end position="447"/>
    </location>
</feature>
<feature type="transmembrane region" description="Helical" evidence="1">
    <location>
        <begin position="448"/>
        <end position="468"/>
    </location>
</feature>
<feature type="topological domain" description="Cytoplasmic" evidence="1">
    <location>
        <begin position="469"/>
        <end position="646"/>
    </location>
</feature>
<feature type="domain" description="STAS" evidence="2">
    <location>
        <begin position="504"/>
        <end position="627"/>
    </location>
</feature>
<evidence type="ECO:0000255" key="1"/>
<evidence type="ECO:0000255" key="2">
    <source>
        <dbReference type="PROSITE-ProRule" id="PRU00198"/>
    </source>
</evidence>
<evidence type="ECO:0000305" key="3"/>
<name>SUT32_ARATH</name>
<sequence length="646" mass="71270">MSSKRASQYHQVEIPPPQPFLKSLKNTLNEILFADDPFRRIRNESKTSKKIELGLRHVFPILEWARGYSLEYLKSDVISGITIASLAIPQGISYAQLANLPPILGLYSSLVPPLVYAIMGSSRDLAVGTVAVASLLTAAMLGKEVNAVVNPKLYLHLAFTATFFAGLMQTCLGLLRLGFVVEILSHAAIVGFMGGAATVVCLQQLKGLLGLHHFTHSTDIVTVLRSIFSQSHMWRWESGVLGCCFLIFLLTTKYISKKRPKLFWISAMSPLVSVIFGTIFLYFLHDQFHGIQFIGELKKGINPPSITHLVFTPPYVMLALKVGIITGVIALAEGIAVGRSFAMYKNYNIDGNKEMIAFGMMNILGSFSSCYLTTGPFSRSAVNYNAGCKTALSNVVMAVAVAVTLLFLTPLFFYTPLVVLSSIIIAAMLGLVDYEAAIHLWKLDKFDFFVCLSAYLGVVFGTIEIGLILSVGISVMRLVLFVGRPKIYVMGNIQNSEIYRNIEHYPQAITRSSLLILHIDGPIYFANSTYLRDRIGRWIDEEEDKLRTSGDISLQYIVLDMSAVGNIDTSGISMLEELNKILGRRELKLVIANPGAEVMKKLSKSTFIESIGKERIYLTVAEAVAACDFMLHTAKPDSPVPEFNNV</sequence>
<keyword id="KW-0472">Membrane</keyword>
<keyword id="KW-1185">Reference proteome</keyword>
<keyword id="KW-0764">Sulfate transport</keyword>
<keyword id="KW-0769">Symport</keyword>
<keyword id="KW-0812">Transmembrane</keyword>
<keyword id="KW-1133">Transmembrane helix</keyword>
<keyword id="KW-0813">Transport</keyword>